<feature type="chain" id="PRO_1000080623" description="Ketol-acid reductoisomerase (NADP(+))">
    <location>
        <begin position="1"/>
        <end position="341"/>
    </location>
</feature>
<feature type="domain" description="KARI N-terminal Rossmann" evidence="2">
    <location>
        <begin position="2"/>
        <end position="182"/>
    </location>
</feature>
<feature type="domain" description="KARI C-terminal knotted" evidence="3">
    <location>
        <begin position="183"/>
        <end position="328"/>
    </location>
</feature>
<feature type="active site" evidence="1">
    <location>
        <position position="108"/>
    </location>
</feature>
<feature type="binding site" evidence="1">
    <location>
        <begin position="25"/>
        <end position="28"/>
    </location>
    <ligand>
        <name>NADP(+)</name>
        <dbReference type="ChEBI" id="CHEBI:58349"/>
    </ligand>
</feature>
<feature type="binding site" evidence="1">
    <location>
        <position position="48"/>
    </location>
    <ligand>
        <name>NADP(+)</name>
        <dbReference type="ChEBI" id="CHEBI:58349"/>
    </ligand>
</feature>
<feature type="binding site" evidence="1">
    <location>
        <position position="51"/>
    </location>
    <ligand>
        <name>NADP(+)</name>
        <dbReference type="ChEBI" id="CHEBI:58349"/>
    </ligand>
</feature>
<feature type="binding site" evidence="1">
    <location>
        <position position="53"/>
    </location>
    <ligand>
        <name>NADP(+)</name>
        <dbReference type="ChEBI" id="CHEBI:58349"/>
    </ligand>
</feature>
<feature type="binding site" evidence="1">
    <location>
        <begin position="83"/>
        <end position="86"/>
    </location>
    <ligand>
        <name>NADP(+)</name>
        <dbReference type="ChEBI" id="CHEBI:58349"/>
    </ligand>
</feature>
<feature type="binding site" evidence="1">
    <location>
        <position position="134"/>
    </location>
    <ligand>
        <name>NADP(+)</name>
        <dbReference type="ChEBI" id="CHEBI:58349"/>
    </ligand>
</feature>
<feature type="binding site" evidence="1">
    <location>
        <position position="191"/>
    </location>
    <ligand>
        <name>Mg(2+)</name>
        <dbReference type="ChEBI" id="CHEBI:18420"/>
        <label>1</label>
    </ligand>
</feature>
<feature type="binding site" evidence="1">
    <location>
        <position position="191"/>
    </location>
    <ligand>
        <name>Mg(2+)</name>
        <dbReference type="ChEBI" id="CHEBI:18420"/>
        <label>2</label>
    </ligand>
</feature>
<feature type="binding site" evidence="1">
    <location>
        <position position="195"/>
    </location>
    <ligand>
        <name>Mg(2+)</name>
        <dbReference type="ChEBI" id="CHEBI:18420"/>
        <label>1</label>
    </ligand>
</feature>
<feature type="binding site" evidence="1">
    <location>
        <position position="227"/>
    </location>
    <ligand>
        <name>Mg(2+)</name>
        <dbReference type="ChEBI" id="CHEBI:18420"/>
        <label>2</label>
    </ligand>
</feature>
<feature type="binding site" evidence="1">
    <location>
        <position position="231"/>
    </location>
    <ligand>
        <name>Mg(2+)</name>
        <dbReference type="ChEBI" id="CHEBI:18420"/>
        <label>2</label>
    </ligand>
</feature>
<feature type="binding site" evidence="1">
    <location>
        <position position="252"/>
    </location>
    <ligand>
        <name>substrate</name>
    </ligand>
</feature>
<gene>
    <name evidence="1" type="primary">ilvC</name>
    <name type="ordered locus">CMS1416</name>
</gene>
<comment type="function">
    <text evidence="1">Involved in the biosynthesis of branched-chain amino acids (BCAA). Catalyzes an alkyl-migration followed by a ketol-acid reduction of (S)-2-acetolactate (S2AL) to yield (R)-2,3-dihydroxy-isovalerate. In the isomerase reaction, S2AL is rearranged via a Mg-dependent methyl migration to produce 3-hydroxy-3-methyl-2-ketobutyrate (HMKB). In the reductase reaction, this 2-ketoacid undergoes a metal-dependent reduction by NADPH to yield (R)-2,3-dihydroxy-isovalerate.</text>
</comment>
<comment type="catalytic activity">
    <reaction evidence="1">
        <text>(2R)-2,3-dihydroxy-3-methylbutanoate + NADP(+) = (2S)-2-acetolactate + NADPH + H(+)</text>
        <dbReference type="Rhea" id="RHEA:22068"/>
        <dbReference type="ChEBI" id="CHEBI:15378"/>
        <dbReference type="ChEBI" id="CHEBI:49072"/>
        <dbReference type="ChEBI" id="CHEBI:57783"/>
        <dbReference type="ChEBI" id="CHEBI:58349"/>
        <dbReference type="ChEBI" id="CHEBI:58476"/>
        <dbReference type="EC" id="1.1.1.86"/>
    </reaction>
</comment>
<comment type="catalytic activity">
    <reaction evidence="1">
        <text>(2R,3R)-2,3-dihydroxy-3-methylpentanoate + NADP(+) = (S)-2-ethyl-2-hydroxy-3-oxobutanoate + NADPH + H(+)</text>
        <dbReference type="Rhea" id="RHEA:13493"/>
        <dbReference type="ChEBI" id="CHEBI:15378"/>
        <dbReference type="ChEBI" id="CHEBI:49256"/>
        <dbReference type="ChEBI" id="CHEBI:49258"/>
        <dbReference type="ChEBI" id="CHEBI:57783"/>
        <dbReference type="ChEBI" id="CHEBI:58349"/>
        <dbReference type="EC" id="1.1.1.86"/>
    </reaction>
</comment>
<comment type="cofactor">
    <cofactor evidence="1">
        <name>Mg(2+)</name>
        <dbReference type="ChEBI" id="CHEBI:18420"/>
    </cofactor>
    <text evidence="1">Binds 2 magnesium ions per subunit.</text>
</comment>
<comment type="pathway">
    <text evidence="1">Amino-acid biosynthesis; L-isoleucine biosynthesis; L-isoleucine from 2-oxobutanoate: step 2/4.</text>
</comment>
<comment type="pathway">
    <text evidence="1">Amino-acid biosynthesis; L-valine biosynthesis; L-valine from pyruvate: step 2/4.</text>
</comment>
<comment type="similarity">
    <text evidence="1">Belongs to the ketol-acid reductoisomerase family.</text>
</comment>
<protein>
    <recommendedName>
        <fullName evidence="1">Ketol-acid reductoisomerase (NADP(+))</fullName>
        <shortName evidence="1">KARI</shortName>
        <ecNumber evidence="1">1.1.1.86</ecNumber>
    </recommendedName>
    <alternativeName>
        <fullName evidence="1">Acetohydroxy-acid isomeroreductase</fullName>
        <shortName evidence="1">AHIR</shortName>
    </alternativeName>
    <alternativeName>
        <fullName evidence="1">Alpha-keto-beta-hydroxylacyl reductoisomerase</fullName>
    </alternativeName>
    <alternativeName>
        <fullName evidence="1">Ketol-acid reductoisomerase type 1</fullName>
    </alternativeName>
    <alternativeName>
        <fullName evidence="1">Ketol-acid reductoisomerase type I</fullName>
    </alternativeName>
</protein>
<dbReference type="EC" id="1.1.1.86" evidence="1"/>
<dbReference type="EMBL" id="AM849034">
    <property type="protein sequence ID" value="CAQ01527.1"/>
    <property type="molecule type" value="Genomic_DNA"/>
</dbReference>
<dbReference type="RefSeq" id="WP_012298794.1">
    <property type="nucleotide sequence ID" value="NZ_MZMN01000003.1"/>
</dbReference>
<dbReference type="SMR" id="B0RIN6"/>
<dbReference type="STRING" id="31964.CMS1416"/>
<dbReference type="GeneID" id="92947062"/>
<dbReference type="KEGG" id="cms:CMS1416"/>
<dbReference type="eggNOG" id="COG0059">
    <property type="taxonomic scope" value="Bacteria"/>
</dbReference>
<dbReference type="HOGENOM" id="CLU_033821_0_1_11"/>
<dbReference type="OrthoDB" id="9804088at2"/>
<dbReference type="UniPathway" id="UPA00047">
    <property type="reaction ID" value="UER00056"/>
</dbReference>
<dbReference type="UniPathway" id="UPA00049">
    <property type="reaction ID" value="UER00060"/>
</dbReference>
<dbReference type="Proteomes" id="UP000001318">
    <property type="component" value="Chromosome"/>
</dbReference>
<dbReference type="GO" id="GO:0005829">
    <property type="term" value="C:cytosol"/>
    <property type="evidence" value="ECO:0007669"/>
    <property type="project" value="TreeGrafter"/>
</dbReference>
<dbReference type="GO" id="GO:0004455">
    <property type="term" value="F:ketol-acid reductoisomerase activity"/>
    <property type="evidence" value="ECO:0007669"/>
    <property type="project" value="UniProtKB-UniRule"/>
</dbReference>
<dbReference type="GO" id="GO:0000287">
    <property type="term" value="F:magnesium ion binding"/>
    <property type="evidence" value="ECO:0007669"/>
    <property type="project" value="UniProtKB-UniRule"/>
</dbReference>
<dbReference type="GO" id="GO:0050661">
    <property type="term" value="F:NADP binding"/>
    <property type="evidence" value="ECO:0007669"/>
    <property type="project" value="InterPro"/>
</dbReference>
<dbReference type="GO" id="GO:0009097">
    <property type="term" value="P:isoleucine biosynthetic process"/>
    <property type="evidence" value="ECO:0007669"/>
    <property type="project" value="UniProtKB-UniRule"/>
</dbReference>
<dbReference type="GO" id="GO:0009099">
    <property type="term" value="P:L-valine biosynthetic process"/>
    <property type="evidence" value="ECO:0007669"/>
    <property type="project" value="UniProtKB-UniRule"/>
</dbReference>
<dbReference type="FunFam" id="3.40.50.720:FF:000023">
    <property type="entry name" value="Ketol-acid reductoisomerase (NADP(+))"/>
    <property type="match status" value="1"/>
</dbReference>
<dbReference type="Gene3D" id="6.10.240.10">
    <property type="match status" value="1"/>
</dbReference>
<dbReference type="Gene3D" id="3.40.50.720">
    <property type="entry name" value="NAD(P)-binding Rossmann-like Domain"/>
    <property type="match status" value="1"/>
</dbReference>
<dbReference type="HAMAP" id="MF_00435">
    <property type="entry name" value="IlvC"/>
    <property type="match status" value="1"/>
</dbReference>
<dbReference type="InterPro" id="IPR008927">
    <property type="entry name" value="6-PGluconate_DH-like_C_sf"/>
</dbReference>
<dbReference type="InterPro" id="IPR013023">
    <property type="entry name" value="KARI"/>
</dbReference>
<dbReference type="InterPro" id="IPR000506">
    <property type="entry name" value="KARI_C"/>
</dbReference>
<dbReference type="InterPro" id="IPR013116">
    <property type="entry name" value="KARI_N"/>
</dbReference>
<dbReference type="InterPro" id="IPR014359">
    <property type="entry name" value="KARI_prok"/>
</dbReference>
<dbReference type="InterPro" id="IPR036291">
    <property type="entry name" value="NAD(P)-bd_dom_sf"/>
</dbReference>
<dbReference type="NCBIfam" id="TIGR00465">
    <property type="entry name" value="ilvC"/>
    <property type="match status" value="1"/>
</dbReference>
<dbReference type="NCBIfam" id="NF004017">
    <property type="entry name" value="PRK05479.1"/>
    <property type="match status" value="1"/>
</dbReference>
<dbReference type="NCBIfam" id="NF009940">
    <property type="entry name" value="PRK13403.1"/>
    <property type="match status" value="1"/>
</dbReference>
<dbReference type="PANTHER" id="PTHR21371">
    <property type="entry name" value="KETOL-ACID REDUCTOISOMERASE, MITOCHONDRIAL"/>
    <property type="match status" value="1"/>
</dbReference>
<dbReference type="PANTHER" id="PTHR21371:SF1">
    <property type="entry name" value="KETOL-ACID REDUCTOISOMERASE, MITOCHONDRIAL"/>
    <property type="match status" value="1"/>
</dbReference>
<dbReference type="Pfam" id="PF01450">
    <property type="entry name" value="KARI_C"/>
    <property type="match status" value="1"/>
</dbReference>
<dbReference type="Pfam" id="PF07991">
    <property type="entry name" value="KARI_N"/>
    <property type="match status" value="1"/>
</dbReference>
<dbReference type="PIRSF" id="PIRSF000116">
    <property type="entry name" value="IlvC_gammaproteo"/>
    <property type="match status" value="1"/>
</dbReference>
<dbReference type="SUPFAM" id="SSF48179">
    <property type="entry name" value="6-phosphogluconate dehydrogenase C-terminal domain-like"/>
    <property type="match status" value="1"/>
</dbReference>
<dbReference type="SUPFAM" id="SSF51735">
    <property type="entry name" value="NAD(P)-binding Rossmann-fold domains"/>
    <property type="match status" value="1"/>
</dbReference>
<dbReference type="PROSITE" id="PS51851">
    <property type="entry name" value="KARI_C"/>
    <property type="match status" value="1"/>
</dbReference>
<dbReference type="PROSITE" id="PS51850">
    <property type="entry name" value="KARI_N"/>
    <property type="match status" value="1"/>
</dbReference>
<proteinExistence type="inferred from homology"/>
<organism>
    <name type="scientific">Clavibacter sepedonicus</name>
    <name type="common">Clavibacter michiganensis subsp. sepedonicus</name>
    <dbReference type="NCBI Taxonomy" id="31964"/>
    <lineage>
        <taxon>Bacteria</taxon>
        <taxon>Bacillati</taxon>
        <taxon>Actinomycetota</taxon>
        <taxon>Actinomycetes</taxon>
        <taxon>Micrococcales</taxon>
        <taxon>Microbacteriaceae</taxon>
        <taxon>Clavibacter</taxon>
    </lineage>
</organism>
<reference key="1">
    <citation type="journal article" date="2008" name="J. Bacteriol.">
        <title>Genome of the actinomycete plant pathogen Clavibacter michiganensis subsp. sepedonicus suggests recent niche adaptation.</title>
        <authorList>
            <person name="Bentley S.D."/>
            <person name="Corton C."/>
            <person name="Brown S.E."/>
            <person name="Barron A."/>
            <person name="Clark L."/>
            <person name="Doggett J."/>
            <person name="Harris B."/>
            <person name="Ormond D."/>
            <person name="Quail M.A."/>
            <person name="May G."/>
            <person name="Francis D."/>
            <person name="Knudson D."/>
            <person name="Parkhill J."/>
            <person name="Ishimaru C.A."/>
        </authorList>
    </citation>
    <scope>NUCLEOTIDE SEQUENCE [LARGE SCALE GENOMIC DNA]</scope>
    <source>
        <strain>ATCC 33113 / DSM 20744 / JCM 9667 / LMG 2889 / ICMP 2535 / C-1</strain>
    </source>
</reference>
<sequence length="341" mass="37153">MTDIVYDKDADLSLIQGRKVAVIGYGSQGHAHALNLRDSGVEVVIGLKEGSTSRAKAEEQGFTVKTPSDASAWADVIVILAPDQHQRGLYADSVRDNLTEGKTLVFAHGFNIRFGYIEAPEGVDVVLVAPKGPGHTVRREFEAGRGVPVIVAVEVDASGKAWDLAWSYAKGIGGLRAGGIRTTFTEETETDLFGEQAVLCGGTSQLVQYGFETLIEAGYQPQIAYFEVLHELKLIVDLMWEGGIAKQRWSISDTAEYGDYVSGPRVISPDVKENMKAVLADIQSGAFADRFIKDQDAGAPEFLELRKKGEEHPIESTGRELRKLFAWNKADDDYTDGSVAR</sequence>
<accession>B0RIN6</accession>
<name>ILVC_CLASE</name>
<evidence type="ECO:0000255" key="1">
    <source>
        <dbReference type="HAMAP-Rule" id="MF_00435"/>
    </source>
</evidence>
<evidence type="ECO:0000255" key="2">
    <source>
        <dbReference type="PROSITE-ProRule" id="PRU01197"/>
    </source>
</evidence>
<evidence type="ECO:0000255" key="3">
    <source>
        <dbReference type="PROSITE-ProRule" id="PRU01198"/>
    </source>
</evidence>
<keyword id="KW-0028">Amino-acid biosynthesis</keyword>
<keyword id="KW-0100">Branched-chain amino acid biosynthesis</keyword>
<keyword id="KW-0460">Magnesium</keyword>
<keyword id="KW-0479">Metal-binding</keyword>
<keyword id="KW-0521">NADP</keyword>
<keyword id="KW-0560">Oxidoreductase</keyword>